<reference key="1">
    <citation type="journal article" date="2007" name="ISME J.">
        <title>Population level functional diversity in a microbial community revealed by comparative genomic and metagenomic analyses.</title>
        <authorList>
            <person name="Bhaya D."/>
            <person name="Grossman A.R."/>
            <person name="Steunou A.-S."/>
            <person name="Khuri N."/>
            <person name="Cohan F.M."/>
            <person name="Hamamura N."/>
            <person name="Melendrez M.C."/>
            <person name="Bateson M.M."/>
            <person name="Ward D.M."/>
            <person name="Heidelberg J.F."/>
        </authorList>
    </citation>
    <scope>NUCLEOTIDE SEQUENCE [LARGE SCALE GENOMIC DNA]</scope>
    <source>
        <strain>JA-3-3Ab</strain>
    </source>
</reference>
<proteinExistence type="inferred from homology"/>
<dbReference type="EMBL" id="CP000239">
    <property type="protein sequence ID" value="ABD00415.1"/>
    <property type="molecule type" value="Genomic_DNA"/>
</dbReference>
<dbReference type="RefSeq" id="WP_011431088.1">
    <property type="nucleotide sequence ID" value="NC_007775.1"/>
</dbReference>
<dbReference type="SMR" id="Q2JSG0"/>
<dbReference type="STRING" id="321327.CYA_2279"/>
<dbReference type="KEGG" id="cya:CYA_2279"/>
<dbReference type="eggNOG" id="COG0228">
    <property type="taxonomic scope" value="Bacteria"/>
</dbReference>
<dbReference type="HOGENOM" id="CLU_100590_3_2_3"/>
<dbReference type="OrthoDB" id="9807878at2"/>
<dbReference type="Proteomes" id="UP000008818">
    <property type="component" value="Chromosome"/>
</dbReference>
<dbReference type="GO" id="GO:0005737">
    <property type="term" value="C:cytoplasm"/>
    <property type="evidence" value="ECO:0007669"/>
    <property type="project" value="UniProtKB-ARBA"/>
</dbReference>
<dbReference type="GO" id="GO:0015935">
    <property type="term" value="C:small ribosomal subunit"/>
    <property type="evidence" value="ECO:0007669"/>
    <property type="project" value="TreeGrafter"/>
</dbReference>
<dbReference type="GO" id="GO:0003735">
    <property type="term" value="F:structural constituent of ribosome"/>
    <property type="evidence" value="ECO:0007669"/>
    <property type="project" value="InterPro"/>
</dbReference>
<dbReference type="GO" id="GO:0006412">
    <property type="term" value="P:translation"/>
    <property type="evidence" value="ECO:0007669"/>
    <property type="project" value="UniProtKB-UniRule"/>
</dbReference>
<dbReference type="Gene3D" id="3.30.1320.10">
    <property type="match status" value="1"/>
</dbReference>
<dbReference type="HAMAP" id="MF_00385">
    <property type="entry name" value="Ribosomal_bS16"/>
    <property type="match status" value="1"/>
</dbReference>
<dbReference type="InterPro" id="IPR000307">
    <property type="entry name" value="Ribosomal_bS16"/>
</dbReference>
<dbReference type="InterPro" id="IPR020592">
    <property type="entry name" value="Ribosomal_bS16_CS"/>
</dbReference>
<dbReference type="InterPro" id="IPR023803">
    <property type="entry name" value="Ribosomal_bS16_dom_sf"/>
</dbReference>
<dbReference type="NCBIfam" id="TIGR00002">
    <property type="entry name" value="S16"/>
    <property type="match status" value="1"/>
</dbReference>
<dbReference type="PANTHER" id="PTHR12919">
    <property type="entry name" value="30S RIBOSOMAL PROTEIN S16"/>
    <property type="match status" value="1"/>
</dbReference>
<dbReference type="PANTHER" id="PTHR12919:SF20">
    <property type="entry name" value="SMALL RIBOSOMAL SUBUNIT PROTEIN BS16M"/>
    <property type="match status" value="1"/>
</dbReference>
<dbReference type="Pfam" id="PF00886">
    <property type="entry name" value="Ribosomal_S16"/>
    <property type="match status" value="1"/>
</dbReference>
<dbReference type="SUPFAM" id="SSF54565">
    <property type="entry name" value="Ribosomal protein S16"/>
    <property type="match status" value="1"/>
</dbReference>
<dbReference type="PROSITE" id="PS00732">
    <property type="entry name" value="RIBOSOMAL_S16"/>
    <property type="match status" value="1"/>
</dbReference>
<accession>Q2JSG0</accession>
<sequence length="155" mass="16762">MVKLRLKRYGKRRQPTYRIVAIESKARREGRPLEELGYYNPRTKETVLETAGLLKWLRCGAQPTDTVDSLLRKAGIYEMLKAGEGGVVAAIRIPAIAKPEAGIPDPAPSTEEPAAVCEASAEMAGQPGEVEPAGAAAEPNSQEPEPEEEKPQVEA</sequence>
<feature type="chain" id="PRO_0000243885" description="Small ribosomal subunit protein bS16">
    <location>
        <begin position="1"/>
        <end position="155"/>
    </location>
</feature>
<feature type="region of interest" description="Disordered" evidence="2">
    <location>
        <begin position="100"/>
        <end position="155"/>
    </location>
</feature>
<feature type="compositionally biased region" description="Low complexity" evidence="2">
    <location>
        <begin position="124"/>
        <end position="143"/>
    </location>
</feature>
<organism>
    <name type="scientific">Synechococcus sp. (strain JA-3-3Ab)</name>
    <name type="common">Cyanobacteria bacterium Yellowstone A-Prime</name>
    <dbReference type="NCBI Taxonomy" id="321327"/>
    <lineage>
        <taxon>Bacteria</taxon>
        <taxon>Bacillati</taxon>
        <taxon>Cyanobacteriota</taxon>
        <taxon>Cyanophyceae</taxon>
        <taxon>Synechococcales</taxon>
        <taxon>Synechococcaceae</taxon>
        <taxon>Synechococcus</taxon>
    </lineage>
</organism>
<name>RS16_SYNJA</name>
<evidence type="ECO:0000255" key="1">
    <source>
        <dbReference type="HAMAP-Rule" id="MF_00385"/>
    </source>
</evidence>
<evidence type="ECO:0000256" key="2">
    <source>
        <dbReference type="SAM" id="MobiDB-lite"/>
    </source>
</evidence>
<evidence type="ECO:0000305" key="3"/>
<keyword id="KW-0687">Ribonucleoprotein</keyword>
<keyword id="KW-0689">Ribosomal protein</keyword>
<gene>
    <name evidence="1" type="primary">rpsP</name>
    <name evidence="1" type="synonym">rps16</name>
    <name type="ordered locus">CYA_2279</name>
</gene>
<comment type="similarity">
    <text evidence="1">Belongs to the bacterial ribosomal protein bS16 family.</text>
</comment>
<protein>
    <recommendedName>
        <fullName evidence="1">Small ribosomal subunit protein bS16</fullName>
    </recommendedName>
    <alternativeName>
        <fullName evidence="3">30S ribosomal protein S16</fullName>
    </alternativeName>
</protein>